<proteinExistence type="inferred from homology"/>
<reference key="1">
    <citation type="journal article" date="1988" name="Nucleic Acids Res.">
        <title>Structure and sequence of the gene for the largest subunit of trypanosomal RNA polymerase III.</title>
        <authorList>
            <person name="Cornelissen A.W.C.A."/>
            <person name="Evers R."/>
            <person name="Koeck J."/>
        </authorList>
    </citation>
    <scope>NUCLEOTIDE SEQUENCE [GENOMIC DNA]</scope>
    <source>
        <strain>427 / Isolate MITat 1.2A</strain>
    </source>
</reference>
<reference key="2">
    <citation type="journal article" date="1989" name="J. Biol. Chem.">
        <title>Molecular characterization of the Trypanosoma brucei RNA polymerase I and III largest subunit genes.</title>
        <authorList>
            <person name="Smith J.L."/>
            <person name="Levin J.R."/>
            <person name="Agabian N."/>
        </authorList>
    </citation>
    <scope>NUCLEOTIDE SEQUENCE [GENOMIC DNA]</scope>
</reference>
<accession>P08968</accession>
<comment type="function">
    <text evidence="1">DNA-dependent RNA polymerase catalyzes the transcription of DNA into RNA using the four ribonucleoside triphosphates as substrates. Largest and catalytic core component of RNA polymerase III which synthesizes small RNAs, such as 5S rRNA and tRNAs. Forms the polymerase active center together with the second largest subunit. A single-stranded DNA template strand of the promoter is positioned within the central active site cleft of Pol III. A bridging helix emanates from RPC1 and crosses the cleft near the catalytic site and is thought to promote translocation of Pol III by acting as a ratchet that moves the RNA-DNA hybrid through the active site by switching from straight to bent conformations at each step of nucleotide addition (By similarity).</text>
</comment>
<comment type="catalytic activity">
    <reaction>
        <text>RNA(n) + a ribonucleoside 5'-triphosphate = RNA(n+1) + diphosphate</text>
        <dbReference type="Rhea" id="RHEA:21248"/>
        <dbReference type="Rhea" id="RHEA-COMP:14527"/>
        <dbReference type="Rhea" id="RHEA-COMP:17342"/>
        <dbReference type="ChEBI" id="CHEBI:33019"/>
        <dbReference type="ChEBI" id="CHEBI:61557"/>
        <dbReference type="ChEBI" id="CHEBI:140395"/>
        <dbReference type="EC" id="2.7.7.6"/>
    </reaction>
</comment>
<comment type="subunit">
    <text evidence="1">Component of the RNA polymerase III (Pol III) complex consisting of 17 subunits.</text>
</comment>
<comment type="subcellular location">
    <subcellularLocation>
        <location evidence="1">Nucleus</location>
    </subcellularLocation>
</comment>
<comment type="similarity">
    <text evidence="3">Belongs to the RNA polymerase beta' chain family.</text>
</comment>
<protein>
    <recommendedName>
        <fullName>DNA-directed RNA polymerase III subunit RPC1</fullName>
        <shortName>RNA polymerase III subunit C1</shortName>
        <ecNumber>2.7.7.6</ecNumber>
    </recommendedName>
    <alternativeName>
        <fullName>DNA-directed RNA polymerase III largest subunit</fullName>
    </alternativeName>
    <alternativeName>
        <fullName>RNA polymerase III subunit C160</fullName>
    </alternativeName>
</protein>
<keyword id="KW-0240">DNA-directed RNA polymerase</keyword>
<keyword id="KW-0460">Magnesium</keyword>
<keyword id="KW-0479">Metal-binding</keyword>
<keyword id="KW-0548">Nucleotidyltransferase</keyword>
<keyword id="KW-0539">Nucleus</keyword>
<keyword id="KW-0804">Transcription</keyword>
<keyword id="KW-0808">Transferase</keyword>
<keyword id="KW-0862">Zinc</keyword>
<dbReference type="EC" id="2.7.7.6"/>
<dbReference type="EMBL" id="X12494">
    <property type="protein sequence ID" value="CAA31014.1"/>
    <property type="molecule type" value="Genomic_DNA"/>
</dbReference>
<dbReference type="EMBL" id="M27163">
    <property type="protein sequence ID" value="AAA30233.1"/>
    <property type="molecule type" value="Genomic_DNA"/>
</dbReference>
<dbReference type="PIR" id="S01393">
    <property type="entry name" value="S01393"/>
</dbReference>
<dbReference type="SMR" id="P08968"/>
<dbReference type="GO" id="GO:0000428">
    <property type="term" value="C:DNA-directed RNA polymerase complex"/>
    <property type="evidence" value="ECO:0007669"/>
    <property type="project" value="UniProtKB-KW"/>
</dbReference>
<dbReference type="GO" id="GO:0005739">
    <property type="term" value="C:mitochondrion"/>
    <property type="evidence" value="ECO:0007669"/>
    <property type="project" value="GOC"/>
</dbReference>
<dbReference type="GO" id="GO:0005634">
    <property type="term" value="C:nucleus"/>
    <property type="evidence" value="ECO:0000314"/>
    <property type="project" value="GeneDB"/>
</dbReference>
<dbReference type="GO" id="GO:0009536">
    <property type="term" value="C:plastid"/>
    <property type="evidence" value="ECO:0007669"/>
    <property type="project" value="GOC"/>
</dbReference>
<dbReference type="GO" id="GO:0003677">
    <property type="term" value="F:DNA binding"/>
    <property type="evidence" value="ECO:0007669"/>
    <property type="project" value="InterPro"/>
</dbReference>
<dbReference type="GO" id="GO:0003899">
    <property type="term" value="F:DNA-directed RNA polymerase activity"/>
    <property type="evidence" value="ECO:0000247"/>
    <property type="project" value="GeneDB"/>
</dbReference>
<dbReference type="GO" id="GO:0046872">
    <property type="term" value="F:metal ion binding"/>
    <property type="evidence" value="ECO:0007669"/>
    <property type="project" value="UniProtKB-KW"/>
</dbReference>
<dbReference type="GO" id="GO:0006351">
    <property type="term" value="P:DNA-templated transcription"/>
    <property type="evidence" value="ECO:0000247"/>
    <property type="project" value="GeneDB"/>
</dbReference>
<dbReference type="CDD" id="cd02736">
    <property type="entry name" value="RNAP_III_Rpc1_C"/>
    <property type="match status" value="1"/>
</dbReference>
<dbReference type="CDD" id="cd02583">
    <property type="entry name" value="RNAP_III_RPC1_N"/>
    <property type="match status" value="1"/>
</dbReference>
<dbReference type="FunFam" id="2.40.40.20:FF:000019">
    <property type="entry name" value="DNA-directed RNA polymerase II subunit RPB1"/>
    <property type="match status" value="1"/>
</dbReference>
<dbReference type="FunFam" id="1.10.274.100:FF:000008">
    <property type="entry name" value="DNA-directed RNA polymerase subunit"/>
    <property type="match status" value="1"/>
</dbReference>
<dbReference type="FunFam" id="3.30.1490.180:FF:000005">
    <property type="entry name" value="DNA-directed RNA polymerase subunit"/>
    <property type="match status" value="1"/>
</dbReference>
<dbReference type="Gene3D" id="1.10.132.30">
    <property type="match status" value="1"/>
</dbReference>
<dbReference type="Gene3D" id="1.10.150.390">
    <property type="match status" value="1"/>
</dbReference>
<dbReference type="Gene3D" id="2.40.40.20">
    <property type="match status" value="1"/>
</dbReference>
<dbReference type="Gene3D" id="6.10.250.2940">
    <property type="match status" value="1"/>
</dbReference>
<dbReference type="Gene3D" id="6.20.50.80">
    <property type="match status" value="1"/>
</dbReference>
<dbReference type="Gene3D" id="3.30.1490.180">
    <property type="entry name" value="RNA polymerase ii"/>
    <property type="match status" value="1"/>
</dbReference>
<dbReference type="Gene3D" id="4.10.860.120">
    <property type="entry name" value="RNA polymerase II, clamp domain"/>
    <property type="match status" value="1"/>
</dbReference>
<dbReference type="Gene3D" id="1.10.274.100">
    <property type="entry name" value="RNA polymerase Rpb1, domain 3"/>
    <property type="match status" value="1"/>
</dbReference>
<dbReference type="InterPro" id="IPR000722">
    <property type="entry name" value="RNA_pol_asu"/>
</dbReference>
<dbReference type="InterPro" id="IPR006592">
    <property type="entry name" value="RNA_pol_N"/>
</dbReference>
<dbReference type="InterPro" id="IPR007080">
    <property type="entry name" value="RNA_pol_Rpb1_1"/>
</dbReference>
<dbReference type="InterPro" id="IPR007066">
    <property type="entry name" value="RNA_pol_Rpb1_3"/>
</dbReference>
<dbReference type="InterPro" id="IPR042102">
    <property type="entry name" value="RNA_pol_Rpb1_3_sf"/>
</dbReference>
<dbReference type="InterPro" id="IPR007083">
    <property type="entry name" value="RNA_pol_Rpb1_4"/>
</dbReference>
<dbReference type="InterPro" id="IPR007081">
    <property type="entry name" value="RNA_pol_Rpb1_5"/>
</dbReference>
<dbReference type="InterPro" id="IPR044893">
    <property type="entry name" value="RNA_pol_Rpb1_clamp_domain"/>
</dbReference>
<dbReference type="InterPro" id="IPR035698">
    <property type="entry name" value="RNAP_III_Rpc1_C"/>
</dbReference>
<dbReference type="InterPro" id="IPR035697">
    <property type="entry name" value="RNAP_III_RPC1_N"/>
</dbReference>
<dbReference type="InterPro" id="IPR038120">
    <property type="entry name" value="Rpb1_funnel_sf"/>
</dbReference>
<dbReference type="InterPro" id="IPR015700">
    <property type="entry name" value="RPC1"/>
</dbReference>
<dbReference type="PANTHER" id="PTHR48446">
    <property type="entry name" value="DNA-DIRECTED RNA POLYMERASE SUBUNIT BETA' N-TERMINAL SECTION"/>
    <property type="match status" value="1"/>
</dbReference>
<dbReference type="PANTHER" id="PTHR48446:SF1">
    <property type="entry name" value="DNA-DIRECTED RNA POLYMERASE SUBUNIT BETA' N-TERMINAL SECTION"/>
    <property type="match status" value="1"/>
</dbReference>
<dbReference type="Pfam" id="PF04997">
    <property type="entry name" value="RNA_pol_Rpb1_1"/>
    <property type="match status" value="1"/>
</dbReference>
<dbReference type="Pfam" id="PF00623">
    <property type="entry name" value="RNA_pol_Rpb1_2"/>
    <property type="match status" value="1"/>
</dbReference>
<dbReference type="Pfam" id="PF04983">
    <property type="entry name" value="RNA_pol_Rpb1_3"/>
    <property type="match status" value="1"/>
</dbReference>
<dbReference type="Pfam" id="PF05000">
    <property type="entry name" value="RNA_pol_Rpb1_4"/>
    <property type="match status" value="1"/>
</dbReference>
<dbReference type="Pfam" id="PF04998">
    <property type="entry name" value="RNA_pol_Rpb1_5"/>
    <property type="match status" value="1"/>
</dbReference>
<dbReference type="SMART" id="SM00663">
    <property type="entry name" value="RPOLA_N"/>
    <property type="match status" value="1"/>
</dbReference>
<dbReference type="SUPFAM" id="SSF64484">
    <property type="entry name" value="beta and beta-prime subunits of DNA dependent RNA-polymerase"/>
    <property type="match status" value="1"/>
</dbReference>
<feature type="chain" id="PRO_0000073950" description="DNA-directed RNA polymerase III subunit RPC1">
    <location>
        <begin position="1"/>
        <end position="1530"/>
    </location>
</feature>
<feature type="region of interest" description="Bridging helix" evidence="1">
    <location>
        <begin position="846"/>
        <end position="858"/>
    </location>
</feature>
<feature type="region of interest" description="Disordered" evidence="2">
    <location>
        <begin position="992"/>
        <end position="1016"/>
    </location>
</feature>
<feature type="region of interest" description="Disordered" evidence="2">
    <location>
        <begin position="1057"/>
        <end position="1099"/>
    </location>
</feature>
<feature type="compositionally biased region" description="Basic and acidic residues" evidence="2">
    <location>
        <begin position="992"/>
        <end position="1001"/>
    </location>
</feature>
<feature type="binding site" evidence="1">
    <location>
        <position position="74"/>
    </location>
    <ligand>
        <name>Zn(2+)</name>
        <dbReference type="ChEBI" id="CHEBI:29105"/>
        <label>1</label>
    </ligand>
</feature>
<feature type="binding site" evidence="1">
    <location>
        <position position="77"/>
    </location>
    <ligand>
        <name>Zn(2+)</name>
        <dbReference type="ChEBI" id="CHEBI:29105"/>
        <label>1</label>
    </ligand>
</feature>
<feature type="binding site" evidence="1">
    <location>
        <position position="84"/>
    </location>
    <ligand>
        <name>Zn(2+)</name>
        <dbReference type="ChEBI" id="CHEBI:29105"/>
        <label>1</label>
    </ligand>
</feature>
<feature type="binding site" evidence="1">
    <location>
        <position position="87"/>
    </location>
    <ligand>
        <name>Zn(2+)</name>
        <dbReference type="ChEBI" id="CHEBI:29105"/>
        <label>1</label>
    </ligand>
</feature>
<feature type="binding site" evidence="1">
    <location>
        <position position="114"/>
    </location>
    <ligand>
        <name>Zn(2+)</name>
        <dbReference type="ChEBI" id="CHEBI:29105"/>
        <label>2</label>
    </ligand>
</feature>
<feature type="binding site" evidence="1">
    <location>
        <position position="117"/>
    </location>
    <ligand>
        <name>Zn(2+)</name>
        <dbReference type="ChEBI" id="CHEBI:29105"/>
        <label>2</label>
    </ligand>
</feature>
<feature type="binding site" evidence="1">
    <location>
        <position position="161"/>
    </location>
    <ligand>
        <name>Zn(2+)</name>
        <dbReference type="ChEBI" id="CHEBI:29105"/>
        <label>2</label>
    </ligand>
</feature>
<feature type="binding site" evidence="1">
    <location>
        <position position="503"/>
    </location>
    <ligand>
        <name>Mg(2+)</name>
        <dbReference type="ChEBI" id="CHEBI:18420"/>
        <note>catalytic</note>
    </ligand>
</feature>
<feature type="binding site" evidence="1">
    <location>
        <position position="505"/>
    </location>
    <ligand>
        <name>Mg(2+)</name>
        <dbReference type="ChEBI" id="CHEBI:18420"/>
        <note>catalytic</note>
    </ligand>
</feature>
<feature type="binding site" evidence="1">
    <location>
        <position position="507"/>
    </location>
    <ligand>
        <name>Mg(2+)</name>
        <dbReference type="ChEBI" id="CHEBI:18420"/>
        <note>catalytic</note>
    </ligand>
</feature>
<feature type="sequence conflict" description="In Ref. 2; AAA30233." evidence="3" ref="2">
    <original>D</original>
    <variation>E</variation>
    <location>
        <position position="1325"/>
    </location>
</feature>
<feature type="sequence conflict" description="In Ref. 2; AAA30233." evidence="3" ref="2">
    <original>I</original>
    <variation>V</variation>
    <location>
        <position position="1493"/>
    </location>
</feature>
<name>RPC1_TRYBB</name>
<sequence length="1530" mass="170272">MLKGSSSTSFLLPQQFVEPLPHAPVEISALHYGLLSRNDVHRLSVLPCRRVVGDVKEYGVNDARLGVCDRLSICETCGLNSIECVGHPGHIDLEAPVFHLGFFTTVLRICRTICKRCSHVLLDDTEIDYYKRRLSSSSLEPLQRTMLIKTIQTDAYKTRVCLKCGGLNGVVRRVRPMRLVHEKYHVEPRRGEGPRENPGGFFDAELRTACAYNKVVGECREFVHDFLDPVRVRQLFLAVPPGEVILLGLAPGVSPTDLLMTTLLVPPVPVRPRGCAGTTTVRDDDLTAQYNDILVSTDTMQDGSLDATRYTETWEMLQMRAARLLDSSLPGFPPNVRTSDLKSYAQRLKSKHGRFRCNLSGKRVDYSGRSVISPDPNLDVDELAVPLHVARVLTYPQRVFKANHELMRRLVRNGPHVHPGATTVYLAQEGSKKSLKNERDRHRLAARLAVGDIVERHVMNGDLVLFNRQPSLHRVSMMAHRARVLPFRTFRFNECCCAPYNADFDGDEMNVHFVQTEKARAEALQLMSTARNIISAKNGEPIIACTQDFLAAAYLVTSRDVFFDRGEFSQMVSHWLGPVTQFRLPIPAILKPVELWTGKQLFELIVRPSPEVDVLLSFEAPTKFYTRKGKHDCAEEGYVAFLDSCFISGRLDKKLLGGGAKDGLFARLHTIAGGGYTARVMSRIAQFTSRYLTNYGFSLGLGDVAPTPELNKQKAAVLARSVEVCDGLIKSAKTGRMIPLPGLTVKQSLEARLNTELSKVRDECGTAAVQTLSIHNNTPLIMVQSGSKGSALNIAQMMACVGQQTVSGKRILDAFQDRSLPHFHRFEEAPAARGFVANSFYSGLSPTEFFFHTMAGREGLVDTAVKTAETGYIYRRLMKAMENLSVRYDGTVRNTKGDVIQLRFGEDGLDPQLMEGNSGTPLNLEQEWLSVRAAYARWVVGLLAGSKTASDGNAIRDNENYFNEFISMLPTEGPSFVEACLNGDQEALKVCEEQESREDALHNSNGKTNDRESRPRTGRLRRAVLISHLVKVCSRKFKDDIQDFFVKKVREQQRIRNLLNLPNTSRERTEGGGDNSGPIANKRTKKRAPSLKVKDSKEGGRVSELRDLEMLQTELLPLTRGMVTRFIAQCASKYLRKACEPGTPCGAIAAQSVGEPSTQMTLRTFHFAGVASMSITQGVPRLVEVINANRNIATPVVTAPVLLMEGEENHCEIFRKRARFVKAQIERVLLREVVSEIVEVCSDTEFYLRVHLNMSVITKLHLPINAITVRQRILAAAGHTMSPLRMLNEDCIEVFSLDTLAVYPHFQDARWVHFSLRRILGLLPDVVVGGIGGINRAMISSNGTEVLAEGAELRAVMNLWGVDSTRVVCNHVAVVERVLGIEAARRVIVDEIQNILKAYSLSIDVRHVYLLADLMTQRGVVLGITRYGIQKMNFNVLTMASFERTTDHLYNAAATQRVDRDLSVSDSIIVGKPVPLGTTSFDLLLDGSISNDILPPQRCVKRGMGPNFHTAKRHHLVPLAAEGVFRLDLF</sequence>
<evidence type="ECO:0000250" key="1"/>
<evidence type="ECO:0000256" key="2">
    <source>
        <dbReference type="SAM" id="MobiDB-lite"/>
    </source>
</evidence>
<evidence type="ECO:0000305" key="3"/>
<organism>
    <name type="scientific">Trypanosoma brucei brucei</name>
    <dbReference type="NCBI Taxonomy" id="5702"/>
    <lineage>
        <taxon>Eukaryota</taxon>
        <taxon>Discoba</taxon>
        <taxon>Euglenozoa</taxon>
        <taxon>Kinetoplastea</taxon>
        <taxon>Metakinetoplastina</taxon>
        <taxon>Trypanosomatida</taxon>
        <taxon>Trypanosomatidae</taxon>
        <taxon>Trypanosoma</taxon>
    </lineage>
</organism>